<gene>
    <name type="primary">HAND1</name>
    <name type="synonym">EHAND</name>
    <name type="synonym">HXT</name>
</gene>
<proteinExistence type="evidence at transcript level"/>
<evidence type="ECO:0000250" key="1"/>
<evidence type="ECO:0000250" key="2">
    <source>
        <dbReference type="UniProtKB" id="O96004"/>
    </source>
</evidence>
<evidence type="ECO:0000250" key="3">
    <source>
        <dbReference type="UniProtKB" id="Q64279"/>
    </source>
</evidence>
<evidence type="ECO:0000255" key="4">
    <source>
        <dbReference type="PROSITE-ProRule" id="PRU00981"/>
    </source>
</evidence>
<evidence type="ECO:0000256" key="5">
    <source>
        <dbReference type="SAM" id="MobiDB-lite"/>
    </source>
</evidence>
<organism>
    <name type="scientific">Ovis aries</name>
    <name type="common">Sheep</name>
    <dbReference type="NCBI Taxonomy" id="9940"/>
    <lineage>
        <taxon>Eukaryota</taxon>
        <taxon>Metazoa</taxon>
        <taxon>Chordata</taxon>
        <taxon>Craniata</taxon>
        <taxon>Vertebrata</taxon>
        <taxon>Euteleostomi</taxon>
        <taxon>Mammalia</taxon>
        <taxon>Eutheria</taxon>
        <taxon>Laurasiatheria</taxon>
        <taxon>Artiodactyla</taxon>
        <taxon>Ruminantia</taxon>
        <taxon>Pecora</taxon>
        <taxon>Bovidae</taxon>
        <taxon>Caprinae</taxon>
        <taxon>Ovis</taxon>
    </lineage>
</organism>
<protein>
    <recommendedName>
        <fullName>Heart- and neural crest derivatives-expressed protein 1</fullName>
    </recommendedName>
    <alternativeName>
        <fullName>Extraembryonic tissues, heart, autonomic nervous system and neural crest derivatives-expressed protein 1</fullName>
        <shortName>eHAND</shortName>
    </alternativeName>
</protein>
<name>HAND1_SHEEP</name>
<accession>Q28555</accession>
<reference key="1">
    <citation type="journal article" date="1995" name="Development">
        <title>Hxt encodes a basic helix-loop-helix transcription factor that regulates trophoblast cell development.</title>
        <authorList>
            <person name="Cross J.C."/>
            <person name="Flannery M.L."/>
            <person name="Blanar M.A."/>
            <person name="Steingrimsson E."/>
            <person name="Jenkins N.A."/>
            <person name="Copeland N.G."/>
            <person name="Rutter W.J."/>
            <person name="Werb Z."/>
        </authorList>
    </citation>
    <scope>NUCLEOTIDE SEQUENCE [MRNA]</scope>
    <source>
        <tissue>Embryo</tissue>
    </source>
</reference>
<comment type="function">
    <text evidence="2 3">Transcription factor that plays an essential role in both trophoblast giant cell differentiation and in cardiac morphogenesis (By similarity). Binds the DNA sequence 5'-NRTCTG-3' (non-canonical E-box) (By similarity). Acts as a transcriptional repressor of SOX15 (By similarity). In the adult, could be required for ongoing expression of cardiac-specific genes (By similarity).</text>
</comment>
<comment type="subunit">
    <text evidence="3">Efficient DNA binding requires dimerization with another bHLH protein. Forms homodimers and heterodimers with TCF3 gene products E12 and E47, HAND2 and HEY1, HEY2 and HEYL (hairy-related transcription factors). Interacts with MDFIC (By similarity). Interacts with SOX15; the interaction enhances HAND1-induced differentiation of trophoblast giant cells (By similarity).</text>
</comment>
<comment type="subcellular location">
    <subcellularLocation>
        <location evidence="1">Nucleus</location>
        <location evidence="1">Nucleoplasm</location>
    </subcellularLocation>
    <subcellularLocation>
        <location evidence="1">Nucleus</location>
        <location evidence="1">Nucleolus</location>
    </subcellularLocation>
    <text evidence="1">Interaction with MDFIC sequesters it into the nucleolus, preventing the transcription factor activity. Phosphorylation by PLK4 disrupts the interaction with MDFIC and releases it from the nucleolus, leading to transcription factor activity (By similarity).</text>
</comment>
<comment type="PTM">
    <text evidence="1">Phosphorylation by PLK4 disrupts the interaction with MDFIC and leads to translocation into the nucleoplasm, allowing dimerization and transcription factor activity.</text>
</comment>
<dbReference type="EMBL" id="U43716">
    <property type="protein sequence ID" value="AAA86275.1"/>
    <property type="molecule type" value="mRNA"/>
</dbReference>
<dbReference type="RefSeq" id="NP_001009785.1">
    <property type="nucleotide sequence ID" value="NM_001009785.1"/>
</dbReference>
<dbReference type="SMR" id="Q28555"/>
<dbReference type="STRING" id="9940.ENSOARP00000010555"/>
<dbReference type="PaxDb" id="9940-ENSOARP00000010555"/>
<dbReference type="GeneID" id="443353"/>
<dbReference type="KEGG" id="oas:443353"/>
<dbReference type="CTD" id="9421"/>
<dbReference type="eggNOG" id="KOG4029">
    <property type="taxonomic scope" value="Eukaryota"/>
</dbReference>
<dbReference type="OrthoDB" id="10055449at2759"/>
<dbReference type="Proteomes" id="UP000002356">
    <property type="component" value="Unplaced"/>
</dbReference>
<dbReference type="GO" id="GO:0005730">
    <property type="term" value="C:nucleolus"/>
    <property type="evidence" value="ECO:0007669"/>
    <property type="project" value="UniProtKB-SubCell"/>
</dbReference>
<dbReference type="GO" id="GO:0005654">
    <property type="term" value="C:nucleoplasm"/>
    <property type="evidence" value="ECO:0007669"/>
    <property type="project" value="UniProtKB-SubCell"/>
</dbReference>
<dbReference type="GO" id="GO:0000981">
    <property type="term" value="F:DNA-binding transcription factor activity, RNA polymerase II-specific"/>
    <property type="evidence" value="ECO:0007669"/>
    <property type="project" value="TreeGrafter"/>
</dbReference>
<dbReference type="GO" id="GO:0046983">
    <property type="term" value="F:protein dimerization activity"/>
    <property type="evidence" value="ECO:0007669"/>
    <property type="project" value="InterPro"/>
</dbReference>
<dbReference type="GO" id="GO:0000977">
    <property type="term" value="F:RNA polymerase II transcription regulatory region sequence-specific DNA binding"/>
    <property type="evidence" value="ECO:0007669"/>
    <property type="project" value="TreeGrafter"/>
</dbReference>
<dbReference type="GO" id="GO:0007507">
    <property type="term" value="P:heart development"/>
    <property type="evidence" value="ECO:0007669"/>
    <property type="project" value="TreeGrafter"/>
</dbReference>
<dbReference type="GO" id="GO:0060707">
    <property type="term" value="P:trophoblast giant cell differentiation"/>
    <property type="evidence" value="ECO:0000250"/>
    <property type="project" value="UniProtKB"/>
</dbReference>
<dbReference type="CDD" id="cd18952">
    <property type="entry name" value="bHLH_TS_HAND1"/>
    <property type="match status" value="1"/>
</dbReference>
<dbReference type="FunFam" id="4.10.280.10:FF:000010">
    <property type="entry name" value="Scleraxis bHLH transcription factor"/>
    <property type="match status" value="1"/>
</dbReference>
<dbReference type="Gene3D" id="4.10.280.10">
    <property type="entry name" value="Helix-loop-helix DNA-binding domain"/>
    <property type="match status" value="1"/>
</dbReference>
<dbReference type="InterPro" id="IPR011598">
    <property type="entry name" value="bHLH_dom"/>
</dbReference>
<dbReference type="InterPro" id="IPR050283">
    <property type="entry name" value="E-box_TF_Regulators"/>
</dbReference>
<dbReference type="InterPro" id="IPR036638">
    <property type="entry name" value="HLH_DNA-bd_sf"/>
</dbReference>
<dbReference type="PANTHER" id="PTHR23349">
    <property type="entry name" value="BASIC HELIX-LOOP-HELIX TRANSCRIPTION FACTOR, TWIST"/>
    <property type="match status" value="1"/>
</dbReference>
<dbReference type="PANTHER" id="PTHR23349:SF3">
    <property type="entry name" value="HEART- AND NEURAL CREST DERIVATIVES-EXPRESSED PROTEIN 1"/>
    <property type="match status" value="1"/>
</dbReference>
<dbReference type="Pfam" id="PF00010">
    <property type="entry name" value="HLH"/>
    <property type="match status" value="1"/>
</dbReference>
<dbReference type="SMART" id="SM00353">
    <property type="entry name" value="HLH"/>
    <property type="match status" value="1"/>
</dbReference>
<dbReference type="SUPFAM" id="SSF47459">
    <property type="entry name" value="HLH, helix-loop-helix DNA-binding domain"/>
    <property type="match status" value="1"/>
</dbReference>
<dbReference type="PROSITE" id="PS50888">
    <property type="entry name" value="BHLH"/>
    <property type="match status" value="1"/>
</dbReference>
<feature type="chain" id="PRO_0000127188" description="Heart- and neural crest derivatives-expressed protein 1">
    <location>
        <begin position="1"/>
        <end position="204"/>
    </location>
</feature>
<feature type="domain" description="bHLH" evidence="4">
    <location>
        <begin position="100"/>
        <end position="152"/>
    </location>
</feature>
<feature type="region of interest" description="Disordered" evidence="5">
    <location>
        <begin position="1"/>
        <end position="24"/>
    </location>
</feature>
<feature type="region of interest" description="Disordered" evidence="5">
    <location>
        <begin position="57"/>
        <end position="115"/>
    </location>
</feature>
<feature type="region of interest" description="Disordered" evidence="5">
    <location>
        <begin position="172"/>
        <end position="204"/>
    </location>
</feature>
<feature type="compositionally biased region" description="Basic residues" evidence="5">
    <location>
        <begin position="8"/>
        <end position="22"/>
    </location>
</feature>
<feature type="compositionally biased region" description="Basic residues" evidence="5">
    <location>
        <begin position="98"/>
        <end position="110"/>
    </location>
</feature>
<feature type="modified residue" description="Phosphothreonine; by PLK4" evidence="3">
    <location>
        <position position="113"/>
    </location>
</feature>
<feature type="modified residue" description="Phosphoserine; by PLK4" evidence="3">
    <location>
        <position position="115"/>
    </location>
</feature>
<keyword id="KW-0010">Activator</keyword>
<keyword id="KW-0217">Developmental protein</keyword>
<keyword id="KW-0238">DNA-binding</keyword>
<keyword id="KW-0539">Nucleus</keyword>
<keyword id="KW-0597">Phosphoprotein</keyword>
<keyword id="KW-1185">Reference proteome</keyword>
<keyword id="KW-0804">Transcription</keyword>
<keyword id="KW-0805">Transcription regulation</keyword>
<sequence>MNLVGSYAHHHHHHHHHHHPHPAHPMLHEPFLFGPASRCHQERPYFQSWLLSPADAAPDFPAGGPPPTTAVRAAAASYGPDARPGQSPGRLEALGGRLGRRKGSGPKKERRRTESINSAFAELRECIPNVPADTKLSKIKTLRLATSYIAYLMDVLAKDAQAGDPEAFKAELKKADGGRESKRKRELQQHEGFPPALGPGEKRD</sequence>